<protein>
    <recommendedName>
        <fullName evidence="1">Divalent metal cation transporter MntH</fullName>
    </recommendedName>
</protein>
<proteinExistence type="inferred from homology"/>
<organism>
    <name type="scientific">Yersinia enterocolitica serotype O:8 / biotype 1B (strain NCTC 13174 / 8081)</name>
    <dbReference type="NCBI Taxonomy" id="393305"/>
    <lineage>
        <taxon>Bacteria</taxon>
        <taxon>Pseudomonadati</taxon>
        <taxon>Pseudomonadota</taxon>
        <taxon>Gammaproteobacteria</taxon>
        <taxon>Enterobacterales</taxon>
        <taxon>Yersiniaceae</taxon>
        <taxon>Yersinia</taxon>
    </lineage>
</organism>
<sequence>MLNSRVVDTPPRTSRRIKLSLMGPAFIAAIGYIDPGNFATNIQAGASFGYTLLWVVVWANFMAMLIQLLSAKLGIATGKNLAEHIRDRFPRPAVWAYWVQAEIIAMATDLAEFIGAAIGFKLLLGVTLLEGAVLTGIATFLILMLQKRGQKPLELVIGGLLLFVAAAYIVELVFSRPEIAALGRGMLIPDLPNRDAVFLAAGVLGATIMPHVIYLHSSLTQTAGENSKADRYASTKLDVAIAMTIAGFVNLAMMATAAAAFHFNGYGSIAEIEQAYLTLQPLLGNAAATIFGLSLVAAGLSSTVVGTLAGQVVMQGFVRFYIPIWVRRTVTMLPSFIVILMGMDATRILVMSQVLLSFGIALALVPLLAFTGNKELMGDMVNSKLIQILGKLIVLVVIGLNAYLLVSLI</sequence>
<name>MNTH_YERE8</name>
<keyword id="KW-0997">Cell inner membrane</keyword>
<keyword id="KW-1003">Cell membrane</keyword>
<keyword id="KW-0406">Ion transport</keyword>
<keyword id="KW-0472">Membrane</keyword>
<keyword id="KW-0769">Symport</keyword>
<keyword id="KW-0812">Transmembrane</keyword>
<keyword id="KW-1133">Transmembrane helix</keyword>
<keyword id="KW-0813">Transport</keyword>
<dbReference type="EMBL" id="AM286415">
    <property type="protein sequence ID" value="CAL11310.1"/>
    <property type="molecule type" value="Genomic_DNA"/>
</dbReference>
<dbReference type="RefSeq" id="WP_011815865.1">
    <property type="nucleotide sequence ID" value="NC_008800.1"/>
</dbReference>
<dbReference type="RefSeq" id="YP_001005542.1">
    <property type="nucleotide sequence ID" value="NC_008800.1"/>
</dbReference>
<dbReference type="SMR" id="A1JLC3"/>
<dbReference type="KEGG" id="yen:YE1219"/>
<dbReference type="PATRIC" id="fig|393305.7.peg.1322"/>
<dbReference type="eggNOG" id="COG1914">
    <property type="taxonomic scope" value="Bacteria"/>
</dbReference>
<dbReference type="HOGENOM" id="CLU_020088_2_0_6"/>
<dbReference type="OrthoDB" id="9787548at2"/>
<dbReference type="Proteomes" id="UP000000642">
    <property type="component" value="Chromosome"/>
</dbReference>
<dbReference type="GO" id="GO:0005886">
    <property type="term" value="C:plasma membrane"/>
    <property type="evidence" value="ECO:0007669"/>
    <property type="project" value="UniProtKB-SubCell"/>
</dbReference>
<dbReference type="GO" id="GO:0015086">
    <property type="term" value="F:cadmium ion transmembrane transporter activity"/>
    <property type="evidence" value="ECO:0007669"/>
    <property type="project" value="TreeGrafter"/>
</dbReference>
<dbReference type="GO" id="GO:0005384">
    <property type="term" value="F:manganese ion transmembrane transporter activity"/>
    <property type="evidence" value="ECO:0007669"/>
    <property type="project" value="TreeGrafter"/>
</dbReference>
<dbReference type="GO" id="GO:0046872">
    <property type="term" value="F:metal ion binding"/>
    <property type="evidence" value="ECO:0007669"/>
    <property type="project" value="UniProtKB-UniRule"/>
</dbReference>
<dbReference type="GO" id="GO:0015293">
    <property type="term" value="F:symporter activity"/>
    <property type="evidence" value="ECO:0007669"/>
    <property type="project" value="UniProtKB-UniRule"/>
</dbReference>
<dbReference type="GO" id="GO:0034755">
    <property type="term" value="P:iron ion transmembrane transport"/>
    <property type="evidence" value="ECO:0007669"/>
    <property type="project" value="TreeGrafter"/>
</dbReference>
<dbReference type="HAMAP" id="MF_00221">
    <property type="entry name" value="NRAMP"/>
    <property type="match status" value="1"/>
</dbReference>
<dbReference type="InterPro" id="IPR001046">
    <property type="entry name" value="NRAMP_fam"/>
</dbReference>
<dbReference type="NCBIfam" id="TIGR01197">
    <property type="entry name" value="nramp"/>
    <property type="match status" value="1"/>
</dbReference>
<dbReference type="NCBIfam" id="NF037982">
    <property type="entry name" value="Nramp_1"/>
    <property type="match status" value="1"/>
</dbReference>
<dbReference type="NCBIfam" id="NF001923">
    <property type="entry name" value="PRK00701.1"/>
    <property type="match status" value="1"/>
</dbReference>
<dbReference type="PANTHER" id="PTHR11706:SF33">
    <property type="entry name" value="NATURAL RESISTANCE-ASSOCIATED MACROPHAGE PROTEIN 2"/>
    <property type="match status" value="1"/>
</dbReference>
<dbReference type="PANTHER" id="PTHR11706">
    <property type="entry name" value="SOLUTE CARRIER PROTEIN FAMILY 11 MEMBER"/>
    <property type="match status" value="1"/>
</dbReference>
<dbReference type="Pfam" id="PF01566">
    <property type="entry name" value="Nramp"/>
    <property type="match status" value="1"/>
</dbReference>
<dbReference type="PRINTS" id="PR00447">
    <property type="entry name" value="NATRESASSCMP"/>
</dbReference>
<accession>A1JLC3</accession>
<gene>
    <name evidence="1" type="primary">mntH</name>
    <name type="ordered locus">YE1219</name>
</gene>
<evidence type="ECO:0000255" key="1">
    <source>
        <dbReference type="HAMAP-Rule" id="MF_00221"/>
    </source>
</evidence>
<feature type="chain" id="PRO_1000024116" description="Divalent metal cation transporter MntH">
    <location>
        <begin position="1"/>
        <end position="409"/>
    </location>
</feature>
<feature type="transmembrane region" description="Helical" evidence="1">
    <location>
        <begin position="19"/>
        <end position="39"/>
    </location>
</feature>
<feature type="transmembrane region" description="Helical" evidence="1">
    <location>
        <begin position="46"/>
        <end position="66"/>
    </location>
</feature>
<feature type="transmembrane region" description="Helical" evidence="1">
    <location>
        <begin position="98"/>
        <end position="118"/>
    </location>
</feature>
<feature type="transmembrane region" description="Helical" evidence="1">
    <location>
        <begin position="122"/>
        <end position="142"/>
    </location>
</feature>
<feature type="transmembrane region" description="Helical" evidence="1">
    <location>
        <begin position="155"/>
        <end position="175"/>
    </location>
</feature>
<feature type="transmembrane region" description="Helical" evidence="1">
    <location>
        <begin position="196"/>
        <end position="216"/>
    </location>
</feature>
<feature type="transmembrane region" description="Helical" evidence="1">
    <location>
        <begin position="241"/>
        <end position="261"/>
    </location>
</feature>
<feature type="transmembrane region" description="Helical" evidence="1">
    <location>
        <begin position="290"/>
        <end position="310"/>
    </location>
</feature>
<feature type="transmembrane region" description="Helical" evidence="1">
    <location>
        <begin position="320"/>
        <end position="340"/>
    </location>
</feature>
<feature type="transmembrane region" description="Helical" evidence="1">
    <location>
        <begin position="348"/>
        <end position="368"/>
    </location>
</feature>
<feature type="transmembrane region" description="Helical" evidence="1">
    <location>
        <begin position="388"/>
        <end position="408"/>
    </location>
</feature>
<reference key="1">
    <citation type="journal article" date="2006" name="PLoS Genet.">
        <title>The complete genome sequence and comparative genome analysis of the high pathogenicity Yersinia enterocolitica strain 8081.</title>
        <authorList>
            <person name="Thomson N.R."/>
            <person name="Howard S."/>
            <person name="Wren B.W."/>
            <person name="Holden M.T.G."/>
            <person name="Crossman L."/>
            <person name="Challis G.L."/>
            <person name="Churcher C."/>
            <person name="Mungall K."/>
            <person name="Brooks K."/>
            <person name="Chillingworth T."/>
            <person name="Feltwell T."/>
            <person name="Abdellah Z."/>
            <person name="Hauser H."/>
            <person name="Jagels K."/>
            <person name="Maddison M."/>
            <person name="Moule S."/>
            <person name="Sanders M."/>
            <person name="Whitehead S."/>
            <person name="Quail M.A."/>
            <person name="Dougan G."/>
            <person name="Parkhill J."/>
            <person name="Prentice M.B."/>
        </authorList>
    </citation>
    <scope>NUCLEOTIDE SEQUENCE [LARGE SCALE GENOMIC DNA]</scope>
    <source>
        <strain>NCTC 13174 / 8081</strain>
    </source>
</reference>
<comment type="function">
    <text evidence="1">H(+)-stimulated, divalent metal cation uptake system.</text>
</comment>
<comment type="subcellular location">
    <subcellularLocation>
        <location evidence="1">Cell inner membrane</location>
        <topology evidence="1">Multi-pass membrane protein</topology>
    </subcellularLocation>
</comment>
<comment type="similarity">
    <text evidence="1">Belongs to the NRAMP family.</text>
</comment>